<protein>
    <recommendedName>
        <fullName>5-formyltetrahydrofolate cyclo-ligase</fullName>
        <ecNumber>6.3.3.2</ecNumber>
    </recommendedName>
    <alternativeName>
        <fullName>5,10-methenyl-tetrahydrofolate synthetase</fullName>
        <shortName>MTHFS</shortName>
        <shortName>Methenyl-THF synthetase</shortName>
    </alternativeName>
</protein>
<evidence type="ECO:0000250" key="1"/>
<evidence type="ECO:0000269" key="2">
    <source>
    </source>
</evidence>
<evidence type="ECO:0000269" key="3">
    <source>
    </source>
</evidence>
<evidence type="ECO:0000269" key="4">
    <source>
    </source>
</evidence>
<evidence type="ECO:0000269" key="5">
    <source>
    </source>
</evidence>
<evidence type="ECO:0000305" key="6"/>
<organism>
    <name type="scientific">Saccharomyces cerevisiae (strain ATCC 204508 / S288c)</name>
    <name type="common">Baker's yeast</name>
    <dbReference type="NCBI Taxonomy" id="559292"/>
    <lineage>
        <taxon>Eukaryota</taxon>
        <taxon>Fungi</taxon>
        <taxon>Dikarya</taxon>
        <taxon>Ascomycota</taxon>
        <taxon>Saccharomycotina</taxon>
        <taxon>Saccharomycetes</taxon>
        <taxon>Saccharomycetales</taxon>
        <taxon>Saccharomycetaceae</taxon>
        <taxon>Saccharomyces</taxon>
    </lineage>
</organism>
<accession>P40099</accession>
<accession>D3DM92</accession>
<name>FTHC_YEAST</name>
<feature type="chain" id="PRO_0000200280" description="5-formyltetrahydrofolate cyclo-ligase">
    <location>
        <begin position="1"/>
        <end position="211"/>
    </location>
</feature>
<feature type="binding site" evidence="1">
    <location>
        <begin position="4"/>
        <end position="8"/>
    </location>
    <ligand>
        <name>ATP</name>
        <dbReference type="ChEBI" id="CHEBI:30616"/>
    </ligand>
</feature>
<feature type="binding site" evidence="1">
    <location>
        <position position="56"/>
    </location>
    <ligand>
        <name>substrate</name>
    </ligand>
</feature>
<feature type="binding site" evidence="1">
    <location>
        <begin position="151"/>
        <end position="158"/>
    </location>
    <ligand>
        <name>ATP</name>
        <dbReference type="ChEBI" id="CHEBI:30616"/>
    </ligand>
</feature>
<feature type="binding site" evidence="1">
    <location>
        <begin position="152"/>
        <end position="156"/>
    </location>
    <ligand>
        <name>substrate</name>
    </ligand>
</feature>
<feature type="binding site" evidence="1">
    <location>
        <position position="194"/>
    </location>
    <ligand>
        <name>ATP</name>
        <dbReference type="ChEBI" id="CHEBI:30616"/>
    </ligand>
</feature>
<keyword id="KW-0067">ATP-binding</keyword>
<keyword id="KW-0325">Glycoprotein</keyword>
<keyword id="KW-0436">Ligase</keyword>
<keyword id="KW-0496">Mitochondrion</keyword>
<keyword id="KW-0547">Nucleotide-binding</keyword>
<keyword id="KW-1185">Reference proteome</keyword>
<comment type="function">
    <text evidence="2">Only enzyme known to utilize 5-formyltetrahydrofolate (folinic acid) as substrate. Contributes to tetrahydrofolate metabolism in an alternative way of folate biosynthesis. May regulate carbon flow through the folate-dependent one-carbon metabolic network that supplies carbon for the biosynthesis of purines, thymidine and amino acids.</text>
</comment>
<comment type="catalytic activity">
    <reaction evidence="2">
        <text>(6S)-5-formyl-5,6,7,8-tetrahydrofolate + ATP = (6R)-5,10-methenyltetrahydrofolate + ADP + phosphate</text>
        <dbReference type="Rhea" id="RHEA:10488"/>
        <dbReference type="ChEBI" id="CHEBI:30616"/>
        <dbReference type="ChEBI" id="CHEBI:43474"/>
        <dbReference type="ChEBI" id="CHEBI:57455"/>
        <dbReference type="ChEBI" id="CHEBI:57457"/>
        <dbReference type="ChEBI" id="CHEBI:456216"/>
        <dbReference type="EC" id="6.3.3.2"/>
    </reaction>
</comment>
<comment type="biophysicochemical properties">
    <kinetics>
        <KM evidence="2">43 uM for ATP</KM>
        <KM evidence="2">33 uM for 5-formyltetrahydrofolate</KM>
    </kinetics>
</comment>
<comment type="subcellular location">
    <subcellularLocation>
        <location evidence="4">Mitochondrion</location>
    </subcellularLocation>
</comment>
<comment type="PTM">
    <text evidence="5">N-glycosylated.</text>
</comment>
<comment type="disruption phenotype">
    <text evidence="2">Abolishes methenyltetrahydrofolate synthase activity and leads to accumulation of folinic acid. Leads to a striking methionine deficiency when combined with ADE16 and ADE17, 2 isoenzymes involved in the purine synthesis.</text>
</comment>
<comment type="miscellaneous">
    <text evidence="3">Present with 468 molecules/cell in log phase SD medium.</text>
</comment>
<comment type="similarity">
    <text evidence="6">Belongs to the 5-formyltetrahydrofolate cyclo-ligase family.</text>
</comment>
<reference key="1">
    <citation type="journal article" date="1997" name="Nature">
        <title>The nucleotide sequence of Saccharomyces cerevisiae chromosome V.</title>
        <authorList>
            <person name="Dietrich F.S."/>
            <person name="Mulligan J.T."/>
            <person name="Hennessy K.M."/>
            <person name="Yelton M.A."/>
            <person name="Allen E."/>
            <person name="Araujo R."/>
            <person name="Aviles E."/>
            <person name="Berno A."/>
            <person name="Brennan T."/>
            <person name="Carpenter J."/>
            <person name="Chen E."/>
            <person name="Cherry J.M."/>
            <person name="Chung E."/>
            <person name="Duncan M."/>
            <person name="Guzman E."/>
            <person name="Hartzell G."/>
            <person name="Hunicke-Smith S."/>
            <person name="Hyman R.W."/>
            <person name="Kayser A."/>
            <person name="Komp C."/>
            <person name="Lashkari D."/>
            <person name="Lew H."/>
            <person name="Lin D."/>
            <person name="Mosedale D."/>
            <person name="Nakahara K."/>
            <person name="Namath A."/>
            <person name="Norgren R."/>
            <person name="Oefner P."/>
            <person name="Oh C."/>
            <person name="Petel F.X."/>
            <person name="Roberts D."/>
            <person name="Sehl P."/>
            <person name="Schramm S."/>
            <person name="Shogren T."/>
            <person name="Smith V."/>
            <person name="Taylor P."/>
            <person name="Wei Y."/>
            <person name="Botstein D."/>
            <person name="Davis R.W."/>
        </authorList>
    </citation>
    <scope>NUCLEOTIDE SEQUENCE [LARGE SCALE GENOMIC DNA]</scope>
    <source>
        <strain>ATCC 204508 / S288c</strain>
    </source>
</reference>
<reference key="2">
    <citation type="journal article" date="2014" name="G3 (Bethesda)">
        <title>The reference genome sequence of Saccharomyces cerevisiae: Then and now.</title>
        <authorList>
            <person name="Engel S.R."/>
            <person name="Dietrich F.S."/>
            <person name="Fisk D.G."/>
            <person name="Binkley G."/>
            <person name="Balakrishnan R."/>
            <person name="Costanzo M.C."/>
            <person name="Dwight S.S."/>
            <person name="Hitz B.C."/>
            <person name="Karra K."/>
            <person name="Nash R.S."/>
            <person name="Weng S."/>
            <person name="Wong E.D."/>
            <person name="Lloyd P."/>
            <person name="Skrzypek M.S."/>
            <person name="Miyasato S.R."/>
            <person name="Simison M."/>
            <person name="Cherry J.M."/>
        </authorList>
    </citation>
    <scope>GENOME REANNOTATION</scope>
    <source>
        <strain>ATCC 204508 / S288c</strain>
    </source>
</reference>
<reference key="3">
    <citation type="journal article" date="2002" name="J. Biol. Chem.">
        <title>Cloning and characterization of methenyltetrahydrofolate synthetase from Saccharomyces cerevisiae.</title>
        <authorList>
            <person name="Holmes W.B."/>
            <person name="Appling D.R."/>
        </authorList>
    </citation>
    <scope>FUNCTION</scope>
    <scope>CATALYTIC ACTIVITY</scope>
    <scope>BIOPHYSICOCHEMICAL PROPERTIES</scope>
    <scope>DISRUPTION PHENOTYPE</scope>
</reference>
<reference key="4">
    <citation type="journal article" date="2003" name="Nature">
        <title>Global analysis of protein expression in yeast.</title>
        <authorList>
            <person name="Ghaemmaghami S."/>
            <person name="Huh W.-K."/>
            <person name="Bower K."/>
            <person name="Howson R.W."/>
            <person name="Belle A."/>
            <person name="Dephoure N."/>
            <person name="O'Shea E.K."/>
            <person name="Weissman J.S."/>
        </authorList>
    </citation>
    <scope>LEVEL OF PROTEIN EXPRESSION [LARGE SCALE ANALYSIS]</scope>
</reference>
<reference key="5">
    <citation type="journal article" date="2003" name="Proc. Natl. Acad. Sci. U.S.A.">
        <title>The proteome of Saccharomyces cerevisiae mitochondria.</title>
        <authorList>
            <person name="Sickmann A."/>
            <person name="Reinders J."/>
            <person name="Wagner Y."/>
            <person name="Joppich C."/>
            <person name="Zahedi R.P."/>
            <person name="Meyer H.E."/>
            <person name="Schoenfisch B."/>
            <person name="Perschil I."/>
            <person name="Chacinska A."/>
            <person name="Guiard B."/>
            <person name="Rehling P."/>
            <person name="Pfanner N."/>
            <person name="Meisinger C."/>
        </authorList>
    </citation>
    <scope>SUBCELLULAR LOCATION [LARGE SCALE ANALYSIS]</scope>
    <source>
        <strain>ATCC 76625 / YPH499</strain>
    </source>
</reference>
<reference key="6">
    <citation type="journal article" date="2009" name="Mol. Syst. Biol.">
        <title>Global analysis of the glycoproteome in Saccharomyces cerevisiae reveals new roles for protein glycosylation in eukaryotes.</title>
        <authorList>
            <person name="Kung L.A."/>
            <person name="Tao S.-C."/>
            <person name="Qian J."/>
            <person name="Smith M.G."/>
            <person name="Snyder M."/>
            <person name="Zhu H."/>
        </authorList>
    </citation>
    <scope>GLYCOSYLATION [LARGE SCALE ANALYSIS]</scope>
</reference>
<gene>
    <name type="primary">FAU1</name>
    <name type="ordered locus">YER183C</name>
</gene>
<sequence>MATKQLLRRQIKRVINALDYDIIAAESHTISQAVRSLIASANSRRVACYMSMDKGEVTTGEIIKNLFQDGQEVFLPRCTHTSESKHFKLREDHHPHLIFHRMSSLKMVRDLKPQGPYQLKEPEPHIEESDILDVVLVPGVAFDIKTGARMGHGAGYYDDFFQRYKILHEGQKPLLVGLCLMEQVASPIPLEKHDYSMDCIVCGDGSIHWFQ</sequence>
<proteinExistence type="evidence at protein level"/>
<dbReference type="EC" id="6.3.3.2"/>
<dbReference type="EMBL" id="U18922">
    <property type="protein sequence ID" value="AAB64710.1"/>
    <property type="molecule type" value="Genomic_DNA"/>
</dbReference>
<dbReference type="EMBL" id="BK006939">
    <property type="protein sequence ID" value="DAA07846.1"/>
    <property type="molecule type" value="Genomic_DNA"/>
</dbReference>
<dbReference type="PIR" id="S50686">
    <property type="entry name" value="S50686"/>
</dbReference>
<dbReference type="RefSeq" id="NP_011110.1">
    <property type="nucleotide sequence ID" value="NM_001179073.1"/>
</dbReference>
<dbReference type="SMR" id="P40099"/>
<dbReference type="BioGRID" id="36937">
    <property type="interactions" value="45"/>
</dbReference>
<dbReference type="FunCoup" id="P40099">
    <property type="interactions" value="258"/>
</dbReference>
<dbReference type="IntAct" id="P40099">
    <property type="interactions" value="3"/>
</dbReference>
<dbReference type="MINT" id="P40099"/>
<dbReference type="STRING" id="4932.YER183C"/>
<dbReference type="PaxDb" id="4932-YER183C"/>
<dbReference type="PeptideAtlas" id="P40099"/>
<dbReference type="EnsemblFungi" id="YER183C_mRNA">
    <property type="protein sequence ID" value="YER183C"/>
    <property type="gene ID" value="YER183C"/>
</dbReference>
<dbReference type="GeneID" id="856932"/>
<dbReference type="KEGG" id="sce:YER183C"/>
<dbReference type="AGR" id="SGD:S000000985"/>
<dbReference type="SGD" id="S000000985">
    <property type="gene designation" value="FAU1"/>
</dbReference>
<dbReference type="VEuPathDB" id="FungiDB:YER183C"/>
<dbReference type="eggNOG" id="KOG3093">
    <property type="taxonomic scope" value="Eukaryota"/>
</dbReference>
<dbReference type="GeneTree" id="ENSGT00390000017791"/>
<dbReference type="HOGENOM" id="CLU_066245_2_1_1"/>
<dbReference type="InParanoid" id="P40099"/>
<dbReference type="OMA" id="DKWGIPT"/>
<dbReference type="OrthoDB" id="2015992at2759"/>
<dbReference type="BioCyc" id="YEAST:YER183C-MONOMER"/>
<dbReference type="Reactome" id="R-SCE-196757">
    <property type="pathway name" value="Metabolism of folate and pterines"/>
</dbReference>
<dbReference type="SABIO-RK" id="P40099"/>
<dbReference type="BioGRID-ORCS" id="856932">
    <property type="hits" value="0 hits in 10 CRISPR screens"/>
</dbReference>
<dbReference type="PRO" id="PR:P40099"/>
<dbReference type="Proteomes" id="UP000002311">
    <property type="component" value="Chromosome V"/>
</dbReference>
<dbReference type="RNAct" id="P40099">
    <property type="molecule type" value="protein"/>
</dbReference>
<dbReference type="GO" id="GO:0005737">
    <property type="term" value="C:cytoplasm"/>
    <property type="evidence" value="ECO:0000318"/>
    <property type="project" value="GO_Central"/>
</dbReference>
<dbReference type="GO" id="GO:0005739">
    <property type="term" value="C:mitochondrion"/>
    <property type="evidence" value="ECO:0007005"/>
    <property type="project" value="SGD"/>
</dbReference>
<dbReference type="GO" id="GO:0030272">
    <property type="term" value="F:5-formyltetrahydrofolate cyclo-ligase activity"/>
    <property type="evidence" value="ECO:0000314"/>
    <property type="project" value="SGD"/>
</dbReference>
<dbReference type="GO" id="GO:0005524">
    <property type="term" value="F:ATP binding"/>
    <property type="evidence" value="ECO:0007669"/>
    <property type="project" value="UniProtKB-KW"/>
</dbReference>
<dbReference type="GO" id="GO:0009396">
    <property type="term" value="P:folic acid-containing compound biosynthetic process"/>
    <property type="evidence" value="ECO:0000314"/>
    <property type="project" value="SGD"/>
</dbReference>
<dbReference type="GO" id="GO:0035999">
    <property type="term" value="P:tetrahydrofolate interconversion"/>
    <property type="evidence" value="ECO:0000318"/>
    <property type="project" value="GO_Central"/>
</dbReference>
<dbReference type="FunFam" id="3.40.50.10420:FF:000012">
    <property type="entry name" value="5-formyltetrahydrofolate cyclo-ligase"/>
    <property type="match status" value="1"/>
</dbReference>
<dbReference type="Gene3D" id="3.40.50.10420">
    <property type="entry name" value="NagB/RpiA/CoA transferase-like"/>
    <property type="match status" value="1"/>
</dbReference>
<dbReference type="InterPro" id="IPR002698">
    <property type="entry name" value="FTHF_cligase"/>
</dbReference>
<dbReference type="InterPro" id="IPR024185">
    <property type="entry name" value="FTHF_cligase-like_sf"/>
</dbReference>
<dbReference type="InterPro" id="IPR037171">
    <property type="entry name" value="NagB/RpiA_transferase-like"/>
</dbReference>
<dbReference type="NCBIfam" id="TIGR02727">
    <property type="entry name" value="MTHFS_bact"/>
    <property type="match status" value="1"/>
</dbReference>
<dbReference type="PANTHER" id="PTHR23407:SF1">
    <property type="entry name" value="5-FORMYLTETRAHYDROFOLATE CYCLO-LIGASE"/>
    <property type="match status" value="1"/>
</dbReference>
<dbReference type="PANTHER" id="PTHR23407">
    <property type="entry name" value="ATPASE INHIBITOR/5-FORMYLTETRAHYDROFOLATE CYCLO-LIGASE"/>
    <property type="match status" value="1"/>
</dbReference>
<dbReference type="Pfam" id="PF01812">
    <property type="entry name" value="5-FTHF_cyc-lig"/>
    <property type="match status" value="1"/>
</dbReference>
<dbReference type="PIRSF" id="PIRSF006806">
    <property type="entry name" value="FTHF_cligase"/>
    <property type="match status" value="1"/>
</dbReference>
<dbReference type="SUPFAM" id="SSF100950">
    <property type="entry name" value="NagB/RpiA/CoA transferase-like"/>
    <property type="match status" value="1"/>
</dbReference>